<protein>
    <recommendedName>
        <fullName evidence="1">ATP synthase epsilon chain</fullName>
    </recommendedName>
    <alternativeName>
        <fullName evidence="1">ATP synthase F1 sector epsilon subunit</fullName>
    </alternativeName>
    <alternativeName>
        <fullName evidence="1">F-ATPase epsilon subunit</fullName>
    </alternativeName>
</protein>
<name>ATPE_BUCBP</name>
<gene>
    <name evidence="1" type="primary">atpC</name>
    <name type="ordered locus">bbp_009</name>
</gene>
<proteinExistence type="inferred from homology"/>
<accession>Q89B38</accession>
<dbReference type="EMBL" id="AE016826">
    <property type="protein sequence ID" value="AAO26753.1"/>
    <property type="molecule type" value="Genomic_DNA"/>
</dbReference>
<dbReference type="RefSeq" id="WP_011091154.1">
    <property type="nucleotide sequence ID" value="NC_004545.1"/>
</dbReference>
<dbReference type="SMR" id="Q89B38"/>
<dbReference type="STRING" id="224915.bbp_009"/>
<dbReference type="KEGG" id="bab:bbp_009"/>
<dbReference type="eggNOG" id="COG0355">
    <property type="taxonomic scope" value="Bacteria"/>
</dbReference>
<dbReference type="HOGENOM" id="CLU_084338_2_0_6"/>
<dbReference type="OrthoDB" id="9791445at2"/>
<dbReference type="Proteomes" id="UP000000601">
    <property type="component" value="Chromosome"/>
</dbReference>
<dbReference type="GO" id="GO:0005886">
    <property type="term" value="C:plasma membrane"/>
    <property type="evidence" value="ECO:0007669"/>
    <property type="project" value="UniProtKB-SubCell"/>
</dbReference>
<dbReference type="GO" id="GO:0045259">
    <property type="term" value="C:proton-transporting ATP synthase complex"/>
    <property type="evidence" value="ECO:0007669"/>
    <property type="project" value="UniProtKB-KW"/>
</dbReference>
<dbReference type="GO" id="GO:0005524">
    <property type="term" value="F:ATP binding"/>
    <property type="evidence" value="ECO:0007669"/>
    <property type="project" value="UniProtKB-UniRule"/>
</dbReference>
<dbReference type="GO" id="GO:0046933">
    <property type="term" value="F:proton-transporting ATP synthase activity, rotational mechanism"/>
    <property type="evidence" value="ECO:0007669"/>
    <property type="project" value="UniProtKB-UniRule"/>
</dbReference>
<dbReference type="CDD" id="cd12152">
    <property type="entry name" value="F1-ATPase_delta"/>
    <property type="match status" value="1"/>
</dbReference>
<dbReference type="FunFam" id="2.60.15.10:FF:000001">
    <property type="entry name" value="ATP synthase epsilon chain"/>
    <property type="match status" value="1"/>
</dbReference>
<dbReference type="Gene3D" id="2.60.15.10">
    <property type="entry name" value="F0F1 ATP synthase delta/epsilon subunit, N-terminal"/>
    <property type="match status" value="1"/>
</dbReference>
<dbReference type="HAMAP" id="MF_00530">
    <property type="entry name" value="ATP_synth_epsil_bac"/>
    <property type="match status" value="1"/>
</dbReference>
<dbReference type="InterPro" id="IPR001469">
    <property type="entry name" value="ATP_synth_F1_dsu/esu"/>
</dbReference>
<dbReference type="InterPro" id="IPR020546">
    <property type="entry name" value="ATP_synth_F1_dsu/esu_N"/>
</dbReference>
<dbReference type="InterPro" id="IPR036771">
    <property type="entry name" value="ATPsynth_dsu/esu_N"/>
</dbReference>
<dbReference type="NCBIfam" id="TIGR01216">
    <property type="entry name" value="ATP_synt_epsi"/>
    <property type="match status" value="1"/>
</dbReference>
<dbReference type="PANTHER" id="PTHR13822">
    <property type="entry name" value="ATP SYNTHASE DELTA/EPSILON CHAIN"/>
    <property type="match status" value="1"/>
</dbReference>
<dbReference type="PANTHER" id="PTHR13822:SF10">
    <property type="entry name" value="ATP SYNTHASE EPSILON CHAIN, CHLOROPLASTIC"/>
    <property type="match status" value="1"/>
</dbReference>
<dbReference type="Pfam" id="PF02823">
    <property type="entry name" value="ATP-synt_DE_N"/>
    <property type="match status" value="1"/>
</dbReference>
<dbReference type="SUPFAM" id="SSF51344">
    <property type="entry name" value="Epsilon subunit of F1F0-ATP synthase N-terminal domain"/>
    <property type="match status" value="1"/>
</dbReference>
<reference key="1">
    <citation type="journal article" date="2003" name="Proc. Natl. Acad. Sci. U.S.A.">
        <title>Reductive genome evolution in Buchnera aphidicola.</title>
        <authorList>
            <person name="van Ham R.C.H.J."/>
            <person name="Kamerbeek J."/>
            <person name="Palacios C."/>
            <person name="Rausell C."/>
            <person name="Abascal F."/>
            <person name="Bastolla U."/>
            <person name="Fernandez J.M."/>
            <person name="Jimenez L."/>
            <person name="Postigo M."/>
            <person name="Silva F.J."/>
            <person name="Tamames J."/>
            <person name="Viguera E."/>
            <person name="Latorre A."/>
            <person name="Valencia A."/>
            <person name="Moran F."/>
            <person name="Moya A."/>
        </authorList>
    </citation>
    <scope>NUCLEOTIDE SEQUENCE [LARGE SCALE GENOMIC DNA]</scope>
    <source>
        <strain>Bp</strain>
    </source>
</reference>
<organism>
    <name type="scientific">Buchnera aphidicola subsp. Baizongia pistaciae (strain Bp)</name>
    <dbReference type="NCBI Taxonomy" id="224915"/>
    <lineage>
        <taxon>Bacteria</taxon>
        <taxon>Pseudomonadati</taxon>
        <taxon>Pseudomonadota</taxon>
        <taxon>Gammaproteobacteria</taxon>
        <taxon>Enterobacterales</taxon>
        <taxon>Erwiniaceae</taxon>
        <taxon>Buchnera</taxon>
    </lineage>
</organism>
<feature type="chain" id="PRO_0000188113" description="ATP synthase epsilon chain">
    <location>
        <begin position="1"/>
        <end position="145"/>
    </location>
</feature>
<sequence>MNNNKVYSLNVVSFEKIIFNDFVKKIQVSGSEGELGIYPGHLQLLSLIKPGPLLILDDHDYQHVIYISGGIIEVQPTVVSILADTAIRGLDLDLNVVLDKKLKLENKISNVDCIDRNDVIQQLSCELAKLRVIEMFKNQYIKKNN</sequence>
<comment type="function">
    <text evidence="1">Produces ATP from ADP in the presence of a proton gradient across the membrane.</text>
</comment>
<comment type="subunit">
    <text>F-type ATPases have 2 components, CF(1) - the catalytic core - and CF(0) - the membrane proton channel. CF(1) has five subunits: alpha(3), beta(3), gamma(1), delta(1), epsilon(1). CF(0) has three main subunits: a, b and c.</text>
</comment>
<comment type="subcellular location">
    <subcellularLocation>
        <location evidence="1">Cell membrane</location>
        <topology evidence="1">Peripheral membrane protein</topology>
    </subcellularLocation>
</comment>
<comment type="similarity">
    <text evidence="1">Belongs to the ATPase epsilon chain family.</text>
</comment>
<evidence type="ECO:0000255" key="1">
    <source>
        <dbReference type="HAMAP-Rule" id="MF_00530"/>
    </source>
</evidence>
<keyword id="KW-0066">ATP synthesis</keyword>
<keyword id="KW-1003">Cell membrane</keyword>
<keyword id="KW-0139">CF(1)</keyword>
<keyword id="KW-0375">Hydrogen ion transport</keyword>
<keyword id="KW-0406">Ion transport</keyword>
<keyword id="KW-0472">Membrane</keyword>
<keyword id="KW-1185">Reference proteome</keyword>
<keyword id="KW-0813">Transport</keyword>